<comment type="function">
    <text evidence="1">Catalyzes carboxymethyl transfer from carboxy-S-adenosyl-L-methionine (Cx-SAM) to 5-hydroxyuridine (ho5U) to form 5-carboxymethoxyuridine (cmo5U) at position 34 in tRNAs.</text>
</comment>
<comment type="catalytic activity">
    <reaction evidence="1">
        <text>carboxy-S-adenosyl-L-methionine + 5-hydroxyuridine(34) in tRNA = 5-carboxymethoxyuridine(34) in tRNA + S-adenosyl-L-homocysteine + H(+)</text>
        <dbReference type="Rhea" id="RHEA:52848"/>
        <dbReference type="Rhea" id="RHEA-COMP:13381"/>
        <dbReference type="Rhea" id="RHEA-COMP:13383"/>
        <dbReference type="ChEBI" id="CHEBI:15378"/>
        <dbReference type="ChEBI" id="CHEBI:57856"/>
        <dbReference type="ChEBI" id="CHEBI:134278"/>
        <dbReference type="ChEBI" id="CHEBI:136877"/>
        <dbReference type="ChEBI" id="CHEBI:136879"/>
    </reaction>
</comment>
<comment type="subunit">
    <text evidence="1">Homotetramer.</text>
</comment>
<comment type="similarity">
    <text evidence="1">Belongs to the class I-like SAM-binding methyltransferase superfamily. CmoB family.</text>
</comment>
<keyword id="KW-1185">Reference proteome</keyword>
<keyword id="KW-0808">Transferase</keyword>
<keyword id="KW-0819">tRNA processing</keyword>
<gene>
    <name evidence="1" type="primary">cmoB</name>
    <name type="ordered locus">Sden_1890</name>
</gene>
<name>CMOB_SHEDO</name>
<feature type="chain" id="PRO_0000313966" description="tRNA U34 carboxymethyltransferase">
    <location>
        <begin position="1"/>
        <end position="330"/>
    </location>
</feature>
<feature type="binding site" evidence="1">
    <location>
        <position position="91"/>
    </location>
    <ligand>
        <name>carboxy-S-adenosyl-L-methionine</name>
        <dbReference type="ChEBI" id="CHEBI:134278"/>
    </ligand>
</feature>
<feature type="binding site" evidence="1">
    <location>
        <position position="105"/>
    </location>
    <ligand>
        <name>carboxy-S-adenosyl-L-methionine</name>
        <dbReference type="ChEBI" id="CHEBI:134278"/>
    </ligand>
</feature>
<feature type="binding site" evidence="1">
    <location>
        <position position="110"/>
    </location>
    <ligand>
        <name>carboxy-S-adenosyl-L-methionine</name>
        <dbReference type="ChEBI" id="CHEBI:134278"/>
    </ligand>
</feature>
<feature type="binding site" evidence="1">
    <location>
        <position position="130"/>
    </location>
    <ligand>
        <name>carboxy-S-adenosyl-L-methionine</name>
        <dbReference type="ChEBI" id="CHEBI:134278"/>
    </ligand>
</feature>
<feature type="binding site" evidence="1">
    <location>
        <begin position="152"/>
        <end position="154"/>
    </location>
    <ligand>
        <name>carboxy-S-adenosyl-L-methionine</name>
        <dbReference type="ChEBI" id="CHEBI:134278"/>
    </ligand>
</feature>
<feature type="binding site" evidence="1">
    <location>
        <begin position="181"/>
        <end position="182"/>
    </location>
    <ligand>
        <name>carboxy-S-adenosyl-L-methionine</name>
        <dbReference type="ChEBI" id="CHEBI:134278"/>
    </ligand>
</feature>
<feature type="binding site" evidence="1">
    <location>
        <position position="196"/>
    </location>
    <ligand>
        <name>carboxy-S-adenosyl-L-methionine</name>
        <dbReference type="ChEBI" id="CHEBI:134278"/>
    </ligand>
</feature>
<feature type="binding site" evidence="1">
    <location>
        <position position="200"/>
    </location>
    <ligand>
        <name>carboxy-S-adenosyl-L-methionine</name>
        <dbReference type="ChEBI" id="CHEBI:134278"/>
    </ligand>
</feature>
<feature type="binding site" evidence="1">
    <location>
        <position position="315"/>
    </location>
    <ligand>
        <name>carboxy-S-adenosyl-L-methionine</name>
        <dbReference type="ChEBI" id="CHEBI:134278"/>
    </ligand>
</feature>
<sequence length="330" mass="37745">MISFSSFYQQIADSTLQHWLEDLPAILGKWQREHKHGNLPKWEKVLNKLNYAEPDSVDFVDSVTIGSGSQLSAGQQQKLENLLRLFQPWRKGPFNVHGIDIDTEWRSDWKWQRVRQHISPLAKRTVLDVGCGSGYHMWRMLGDGAARVVGIDPSPLFLCQFEAIKRLAGNQHPVHLLPLGIEELPPLDAFDTVFSMGVLYHRRSPIDHLYQLRDQLRMGGELVLETLVIDGDENTVLVPEDRYGKMNNVWFLPSVAALMLWLKKCDFTNIRCVDVDTTSLAEQRSTTWMPNESLVDYLDPKDINLTIEGYPAPKRATIIATKNQPNFDLI</sequence>
<protein>
    <recommendedName>
        <fullName evidence="1">tRNA U34 carboxymethyltransferase</fullName>
        <ecNumber evidence="1">2.5.1.-</ecNumber>
    </recommendedName>
</protein>
<organism>
    <name type="scientific">Shewanella denitrificans (strain OS217 / ATCC BAA-1090 / DSM 15013)</name>
    <dbReference type="NCBI Taxonomy" id="318161"/>
    <lineage>
        <taxon>Bacteria</taxon>
        <taxon>Pseudomonadati</taxon>
        <taxon>Pseudomonadota</taxon>
        <taxon>Gammaproteobacteria</taxon>
        <taxon>Alteromonadales</taxon>
        <taxon>Shewanellaceae</taxon>
        <taxon>Shewanella</taxon>
    </lineage>
</organism>
<dbReference type="EC" id="2.5.1.-" evidence="1"/>
<dbReference type="EMBL" id="CP000302">
    <property type="protein sequence ID" value="ABE55173.1"/>
    <property type="molecule type" value="Genomic_DNA"/>
</dbReference>
<dbReference type="RefSeq" id="WP_011496329.1">
    <property type="nucleotide sequence ID" value="NC_007954.1"/>
</dbReference>
<dbReference type="SMR" id="Q12N03"/>
<dbReference type="STRING" id="318161.Sden_1890"/>
<dbReference type="KEGG" id="sdn:Sden_1890"/>
<dbReference type="eggNOG" id="COG0500">
    <property type="taxonomic scope" value="Bacteria"/>
</dbReference>
<dbReference type="HOGENOM" id="CLU_052665_0_0_6"/>
<dbReference type="OrthoDB" id="9773188at2"/>
<dbReference type="Proteomes" id="UP000001982">
    <property type="component" value="Chromosome"/>
</dbReference>
<dbReference type="GO" id="GO:0008168">
    <property type="term" value="F:methyltransferase activity"/>
    <property type="evidence" value="ECO:0007669"/>
    <property type="project" value="TreeGrafter"/>
</dbReference>
<dbReference type="GO" id="GO:0016765">
    <property type="term" value="F:transferase activity, transferring alkyl or aryl (other than methyl) groups"/>
    <property type="evidence" value="ECO:0007669"/>
    <property type="project" value="UniProtKB-UniRule"/>
</dbReference>
<dbReference type="GO" id="GO:0002098">
    <property type="term" value="P:tRNA wobble uridine modification"/>
    <property type="evidence" value="ECO:0007669"/>
    <property type="project" value="InterPro"/>
</dbReference>
<dbReference type="CDD" id="cd02440">
    <property type="entry name" value="AdoMet_MTases"/>
    <property type="match status" value="1"/>
</dbReference>
<dbReference type="Gene3D" id="3.40.50.150">
    <property type="entry name" value="Vaccinia Virus protein VP39"/>
    <property type="match status" value="1"/>
</dbReference>
<dbReference type="HAMAP" id="MF_01590">
    <property type="entry name" value="tRNA_carboxymethyltr_CmoB"/>
    <property type="match status" value="1"/>
</dbReference>
<dbReference type="InterPro" id="IPR010017">
    <property type="entry name" value="CmoB"/>
</dbReference>
<dbReference type="InterPro" id="IPR027555">
    <property type="entry name" value="Mo5U34_MeTrfas-like"/>
</dbReference>
<dbReference type="InterPro" id="IPR029063">
    <property type="entry name" value="SAM-dependent_MTases_sf"/>
</dbReference>
<dbReference type="NCBIfam" id="NF011650">
    <property type="entry name" value="PRK15068.1"/>
    <property type="match status" value="1"/>
</dbReference>
<dbReference type="NCBIfam" id="TIGR00452">
    <property type="entry name" value="tRNA 5-methoxyuridine(34)/uridine 5-oxyacetic acid(34) synthase CmoB"/>
    <property type="match status" value="1"/>
</dbReference>
<dbReference type="PANTHER" id="PTHR43464">
    <property type="entry name" value="METHYLTRANSFERASE"/>
    <property type="match status" value="1"/>
</dbReference>
<dbReference type="PANTHER" id="PTHR43464:SF95">
    <property type="entry name" value="TRNA U34 CARBOXYMETHYLTRANSFERASE"/>
    <property type="match status" value="1"/>
</dbReference>
<dbReference type="Pfam" id="PF08003">
    <property type="entry name" value="Methyltransf_9"/>
    <property type="match status" value="1"/>
</dbReference>
<dbReference type="SUPFAM" id="SSF53335">
    <property type="entry name" value="S-adenosyl-L-methionine-dependent methyltransferases"/>
    <property type="match status" value="1"/>
</dbReference>
<reference key="1">
    <citation type="submission" date="2006-03" db="EMBL/GenBank/DDBJ databases">
        <title>Complete sequence of Shewanella denitrificans OS217.</title>
        <authorList>
            <consortium name="US DOE Joint Genome Institute"/>
            <person name="Copeland A."/>
            <person name="Lucas S."/>
            <person name="Lapidus A."/>
            <person name="Barry K."/>
            <person name="Detter J.C."/>
            <person name="Glavina del Rio T."/>
            <person name="Hammon N."/>
            <person name="Israni S."/>
            <person name="Dalin E."/>
            <person name="Tice H."/>
            <person name="Pitluck S."/>
            <person name="Brettin T."/>
            <person name="Bruce D."/>
            <person name="Han C."/>
            <person name="Tapia R."/>
            <person name="Gilna P."/>
            <person name="Kiss H."/>
            <person name="Schmutz J."/>
            <person name="Larimer F."/>
            <person name="Land M."/>
            <person name="Hauser L."/>
            <person name="Kyrpides N."/>
            <person name="Lykidis A."/>
            <person name="Richardson P."/>
        </authorList>
    </citation>
    <scope>NUCLEOTIDE SEQUENCE [LARGE SCALE GENOMIC DNA]</scope>
    <source>
        <strain>OS217 / ATCC BAA-1090 / DSM 15013</strain>
    </source>
</reference>
<proteinExistence type="inferred from homology"/>
<accession>Q12N03</accession>
<evidence type="ECO:0000255" key="1">
    <source>
        <dbReference type="HAMAP-Rule" id="MF_01590"/>
    </source>
</evidence>